<feature type="chain" id="PRO_1000093347" description="Endonuclease MutS2">
    <location>
        <begin position="1"/>
        <end position="785"/>
    </location>
</feature>
<feature type="domain" description="Smr" evidence="1">
    <location>
        <begin position="710"/>
        <end position="785"/>
    </location>
</feature>
<feature type="binding site" evidence="1">
    <location>
        <begin position="332"/>
        <end position="339"/>
    </location>
    <ligand>
        <name>ATP</name>
        <dbReference type="ChEBI" id="CHEBI:30616"/>
    </ligand>
</feature>
<reference key="1">
    <citation type="submission" date="2008-04" db="EMBL/GenBank/DDBJ databases">
        <title>Complete sequence of Clostridium botulinum strain Eklund.</title>
        <authorList>
            <person name="Brinkac L.M."/>
            <person name="Brown J.L."/>
            <person name="Bruce D."/>
            <person name="Detter C."/>
            <person name="Munk C."/>
            <person name="Smith L.A."/>
            <person name="Smith T.J."/>
            <person name="Sutton G."/>
            <person name="Brettin T.S."/>
        </authorList>
    </citation>
    <scope>NUCLEOTIDE SEQUENCE [LARGE SCALE GENOMIC DNA]</scope>
    <source>
        <strain>Eklund 17B / Type B</strain>
    </source>
</reference>
<dbReference type="EC" id="3.1.-.-" evidence="1"/>
<dbReference type="EC" id="3.6.4.-" evidence="1"/>
<dbReference type="EMBL" id="CP001056">
    <property type="protein sequence ID" value="ACD24590.1"/>
    <property type="molecule type" value="Genomic_DNA"/>
</dbReference>
<dbReference type="SMR" id="B2TS45"/>
<dbReference type="KEGG" id="cbk:CLL_A2463"/>
<dbReference type="PATRIC" id="fig|935198.13.peg.2423"/>
<dbReference type="HOGENOM" id="CLU_011252_2_1_9"/>
<dbReference type="Proteomes" id="UP000001195">
    <property type="component" value="Chromosome"/>
</dbReference>
<dbReference type="GO" id="GO:0005524">
    <property type="term" value="F:ATP binding"/>
    <property type="evidence" value="ECO:0007669"/>
    <property type="project" value="UniProtKB-UniRule"/>
</dbReference>
<dbReference type="GO" id="GO:0016887">
    <property type="term" value="F:ATP hydrolysis activity"/>
    <property type="evidence" value="ECO:0007669"/>
    <property type="project" value="InterPro"/>
</dbReference>
<dbReference type="GO" id="GO:0140664">
    <property type="term" value="F:ATP-dependent DNA damage sensor activity"/>
    <property type="evidence" value="ECO:0007669"/>
    <property type="project" value="InterPro"/>
</dbReference>
<dbReference type="GO" id="GO:0004519">
    <property type="term" value="F:endonuclease activity"/>
    <property type="evidence" value="ECO:0007669"/>
    <property type="project" value="UniProtKB-UniRule"/>
</dbReference>
<dbReference type="GO" id="GO:0030983">
    <property type="term" value="F:mismatched DNA binding"/>
    <property type="evidence" value="ECO:0007669"/>
    <property type="project" value="InterPro"/>
</dbReference>
<dbReference type="GO" id="GO:0043023">
    <property type="term" value="F:ribosomal large subunit binding"/>
    <property type="evidence" value="ECO:0007669"/>
    <property type="project" value="UniProtKB-UniRule"/>
</dbReference>
<dbReference type="GO" id="GO:0019843">
    <property type="term" value="F:rRNA binding"/>
    <property type="evidence" value="ECO:0007669"/>
    <property type="project" value="UniProtKB-UniRule"/>
</dbReference>
<dbReference type="GO" id="GO:0006298">
    <property type="term" value="P:mismatch repair"/>
    <property type="evidence" value="ECO:0007669"/>
    <property type="project" value="InterPro"/>
</dbReference>
<dbReference type="GO" id="GO:0045910">
    <property type="term" value="P:negative regulation of DNA recombination"/>
    <property type="evidence" value="ECO:0007669"/>
    <property type="project" value="InterPro"/>
</dbReference>
<dbReference type="GO" id="GO:0072344">
    <property type="term" value="P:rescue of stalled ribosome"/>
    <property type="evidence" value="ECO:0007669"/>
    <property type="project" value="UniProtKB-UniRule"/>
</dbReference>
<dbReference type="CDD" id="cd03280">
    <property type="entry name" value="ABC_MutS2"/>
    <property type="match status" value="1"/>
</dbReference>
<dbReference type="CDD" id="cd06503">
    <property type="entry name" value="ATP-synt_Fo_b"/>
    <property type="match status" value="1"/>
</dbReference>
<dbReference type="FunFam" id="3.30.1370.110:FF:000007">
    <property type="entry name" value="Endonuclease MutS2"/>
    <property type="match status" value="1"/>
</dbReference>
<dbReference type="FunFam" id="3.40.50.300:FF:000830">
    <property type="entry name" value="Endonuclease MutS2"/>
    <property type="match status" value="1"/>
</dbReference>
<dbReference type="Gene3D" id="3.30.1370.110">
    <property type="match status" value="1"/>
</dbReference>
<dbReference type="Gene3D" id="3.40.50.300">
    <property type="entry name" value="P-loop containing nucleotide triphosphate hydrolases"/>
    <property type="match status" value="1"/>
</dbReference>
<dbReference type="HAMAP" id="MF_00092">
    <property type="entry name" value="MutS2"/>
    <property type="match status" value="1"/>
</dbReference>
<dbReference type="InterPro" id="IPR000432">
    <property type="entry name" value="DNA_mismatch_repair_MutS_C"/>
</dbReference>
<dbReference type="InterPro" id="IPR007696">
    <property type="entry name" value="DNA_mismatch_repair_MutS_core"/>
</dbReference>
<dbReference type="InterPro" id="IPR036187">
    <property type="entry name" value="DNA_mismatch_repair_MutS_sf"/>
</dbReference>
<dbReference type="InterPro" id="IPR046893">
    <property type="entry name" value="MSSS"/>
</dbReference>
<dbReference type="InterPro" id="IPR045076">
    <property type="entry name" value="MutS"/>
</dbReference>
<dbReference type="InterPro" id="IPR005747">
    <property type="entry name" value="MutS2"/>
</dbReference>
<dbReference type="InterPro" id="IPR027417">
    <property type="entry name" value="P-loop_NTPase"/>
</dbReference>
<dbReference type="InterPro" id="IPR002625">
    <property type="entry name" value="Smr_dom"/>
</dbReference>
<dbReference type="InterPro" id="IPR036063">
    <property type="entry name" value="Smr_dom_sf"/>
</dbReference>
<dbReference type="NCBIfam" id="TIGR01069">
    <property type="entry name" value="mutS2"/>
    <property type="match status" value="1"/>
</dbReference>
<dbReference type="PANTHER" id="PTHR48466:SF2">
    <property type="entry name" value="OS10G0509000 PROTEIN"/>
    <property type="match status" value="1"/>
</dbReference>
<dbReference type="PANTHER" id="PTHR48466">
    <property type="entry name" value="OS10G0509000 PROTEIN-RELATED"/>
    <property type="match status" value="1"/>
</dbReference>
<dbReference type="Pfam" id="PF20297">
    <property type="entry name" value="MSSS"/>
    <property type="match status" value="1"/>
</dbReference>
<dbReference type="Pfam" id="PF00488">
    <property type="entry name" value="MutS_V"/>
    <property type="match status" value="1"/>
</dbReference>
<dbReference type="Pfam" id="PF01713">
    <property type="entry name" value="Smr"/>
    <property type="match status" value="1"/>
</dbReference>
<dbReference type="PIRSF" id="PIRSF005814">
    <property type="entry name" value="MutS_YshD"/>
    <property type="match status" value="1"/>
</dbReference>
<dbReference type="SMART" id="SM00534">
    <property type="entry name" value="MUTSac"/>
    <property type="match status" value="1"/>
</dbReference>
<dbReference type="SMART" id="SM00533">
    <property type="entry name" value="MUTSd"/>
    <property type="match status" value="1"/>
</dbReference>
<dbReference type="SMART" id="SM00463">
    <property type="entry name" value="SMR"/>
    <property type="match status" value="1"/>
</dbReference>
<dbReference type="SUPFAM" id="SSF48334">
    <property type="entry name" value="DNA repair protein MutS, domain III"/>
    <property type="match status" value="1"/>
</dbReference>
<dbReference type="SUPFAM" id="SSF52540">
    <property type="entry name" value="P-loop containing nucleoside triphosphate hydrolases"/>
    <property type="match status" value="1"/>
</dbReference>
<dbReference type="SUPFAM" id="SSF160443">
    <property type="entry name" value="SMR domain-like"/>
    <property type="match status" value="1"/>
</dbReference>
<dbReference type="PROSITE" id="PS50828">
    <property type="entry name" value="SMR"/>
    <property type="match status" value="1"/>
</dbReference>
<keyword id="KW-0067">ATP-binding</keyword>
<keyword id="KW-0238">DNA-binding</keyword>
<keyword id="KW-0255">Endonuclease</keyword>
<keyword id="KW-0378">Hydrolase</keyword>
<keyword id="KW-0540">Nuclease</keyword>
<keyword id="KW-0547">Nucleotide-binding</keyword>
<keyword id="KW-0694">RNA-binding</keyword>
<keyword id="KW-0699">rRNA-binding</keyword>
<name>MUTS2_CLOBB</name>
<organism>
    <name type="scientific">Clostridium botulinum (strain Eklund 17B / Type B)</name>
    <dbReference type="NCBI Taxonomy" id="935198"/>
    <lineage>
        <taxon>Bacteria</taxon>
        <taxon>Bacillati</taxon>
        <taxon>Bacillota</taxon>
        <taxon>Clostridia</taxon>
        <taxon>Eubacteriales</taxon>
        <taxon>Clostridiaceae</taxon>
        <taxon>Clostridium</taxon>
    </lineage>
</organism>
<gene>
    <name evidence="1" type="primary">mutS2</name>
    <name evidence="1" type="synonym">rqcU</name>
    <name type="ordered locus">CLL_A2463</name>
</gene>
<sequence>MNKRSLRVLEFNKVKEILKKYAYSSSAKKLVDELVPYDNTYEINNSLEESNEALEILMKKGNPPIEGLCDIGDILQRAKKGGTLTPEQLLKVLGMLTATRRMQEFFKREEQEVSFPKLEDLAYILAPINDLEKEIERSILSEDEVSDNASTTLYNIRRSLKEKNSSVREKINSIVRSNSKYLQDSLYTIRGDRYVIPVKAEYKSSVPGLVHDQSSTGATLFIEPMGLVNLNNEIKELMLKEKAEIDRVLSALSLKVKMNAEHCESNLKILTNLDFIFSKGKYACELNAIKPMVRDDGIFNIMSGRHPLIEKDKVVPLDVVLGDEFDTLMITGPNTGGKTVTLKTVGLLHIMALSGLLIPASSNSSVSFFKEVFADIGDEQSIEQSLSTFSSHLTNIVNIMEYDNRQSLILFDELGGGTDPAEGAALAIAIIENLSSKGAKLIATTHYSELKAYALNKDRVENASVEFDINTLRPTYRLLIGVPGKSNAFEISKRIGLGKEVIDCAKNYMSKENLEFEGLIRNLQEKSIIAKKDARDAKVIKDEADNLKKKYEQKLERLEKVKDKAYMEAREEAKKIVANAKDEADEILKAMRELEKLGIGSGGRQRLEEERKKLKDSLEEKEKNLYKMKENDGEVLEKVALGMEAFLPSLNQTVVVISMPDNRGEVQVEAGIMKISVKLKDLRKTKQSKVEKVKKKRELKLHFSKVENRIDLRGLDAEEACYRVDKYLDDAYMGNLGEVTIVHGKGTGILRKAINDMLKRHVHVKNYRLGGYGEGGDGATIVELK</sequence>
<evidence type="ECO:0000255" key="1">
    <source>
        <dbReference type="HAMAP-Rule" id="MF_00092"/>
    </source>
</evidence>
<protein>
    <recommendedName>
        <fullName evidence="1">Endonuclease MutS2</fullName>
        <ecNumber evidence="1">3.1.-.-</ecNumber>
    </recommendedName>
    <alternativeName>
        <fullName evidence="1">Ribosome-associated protein quality control-upstream factor</fullName>
        <shortName evidence="1">RQC-upstream factor</shortName>
        <shortName evidence="1">RqcU</shortName>
        <ecNumber evidence="1">3.6.4.-</ecNumber>
    </alternativeName>
</protein>
<accession>B2TS45</accession>
<proteinExistence type="inferred from homology"/>
<comment type="function">
    <text evidence="1">Endonuclease that is involved in the suppression of homologous recombination and thus may have a key role in the control of bacterial genetic diversity.</text>
</comment>
<comment type="function">
    <text evidence="1">Acts as a ribosome collision sensor, splitting the ribosome into its 2 subunits. Detects stalled/collided 70S ribosomes which it binds and splits by an ATP-hydrolysis driven conformational change. Acts upstream of the ribosome quality control system (RQC), a ribosome-associated complex that mediates the extraction of incompletely synthesized nascent chains from stalled ribosomes and their subsequent degradation. Probably generates substrates for RQC.</text>
</comment>
<comment type="subunit">
    <text evidence="1">Homodimer. Binds to stalled ribosomes, contacting rRNA.</text>
</comment>
<comment type="similarity">
    <text evidence="1">Belongs to the DNA mismatch repair MutS family. MutS2 subfamily.</text>
</comment>